<comment type="function">
    <text>Flagellin is the subunit protein which polymerizes to form the filaments of bacterial flagella. Important for motility and virulence.</text>
</comment>
<comment type="subunit">
    <text>Heteromer of FlaA and FlaB. FlaB is located proximal to the hook while the remainder of the filament is composed of the predominant FlaA.</text>
</comment>
<comment type="subcellular location">
    <subcellularLocation>
        <location>Secreted</location>
    </subcellularLocation>
    <subcellularLocation>
        <location>Bacterial flagellum</location>
    </subcellularLocation>
</comment>
<comment type="similarity">
    <text evidence="1">Belongs to the bacterial flagellin family.</text>
</comment>
<feature type="chain" id="PRO_0000182608" description="Flagellin A">
    <location>
        <begin position="1"/>
        <end position="494"/>
    </location>
</feature>
<reference key="1">
    <citation type="journal article" date="1992" name="Infect. Immun.">
        <title>Biochemical studies of Helicobacter mustelae fatty acid composition and flagella.</title>
        <authorList>
            <person name="Suerbaum S."/>
            <person name="Geis G."/>
            <person name="Josenhans C."/>
            <person name="Opferkuch W."/>
        </authorList>
    </citation>
    <scope>PROTEIN SEQUENCE OF 1-15</scope>
    <source>
        <strain>NCTC 12032</strain>
    </source>
</reference>
<reference key="2">
    <citation type="journal article" date="1995" name="J. Bacteriol.">
        <title>Comparative ultrastructural and functional studies of Helicobacter pylori and Helicobacter mustelae flagellin mutants: both flagellin subunits, FlaA and FlaB, are necessary for full motility in Helicobacter species.</title>
        <authorList>
            <person name="Josenhans C."/>
            <person name="Labigne A."/>
            <person name="Suerbaum S."/>
        </authorList>
    </citation>
    <scope>NUCLEOTIDE SEQUENCE [GENOMIC DNA] OF 13-494</scope>
    <source>
        <strain>NCTC 12032</strain>
    </source>
</reference>
<accession>P50612</accession>
<protein>
    <recommendedName>
        <fullName>Flagellin A</fullName>
    </recommendedName>
</protein>
<gene>
    <name type="primary">flaA</name>
</gene>
<dbReference type="EMBL" id="L38478">
    <property type="protein sequence ID" value="AAC41457.1"/>
    <property type="molecule type" value="Genomic_DNA"/>
</dbReference>
<dbReference type="PIR" id="A57269">
    <property type="entry name" value="A57269"/>
</dbReference>
<dbReference type="SMR" id="P50612"/>
<dbReference type="GO" id="GO:0009288">
    <property type="term" value="C:bacterial-type flagellum"/>
    <property type="evidence" value="ECO:0007669"/>
    <property type="project" value="UniProtKB-SubCell"/>
</dbReference>
<dbReference type="GO" id="GO:0005576">
    <property type="term" value="C:extracellular region"/>
    <property type="evidence" value="ECO:0007669"/>
    <property type="project" value="UniProtKB-SubCell"/>
</dbReference>
<dbReference type="GO" id="GO:0005198">
    <property type="term" value="F:structural molecule activity"/>
    <property type="evidence" value="ECO:0007669"/>
    <property type="project" value="InterPro"/>
</dbReference>
<dbReference type="Gene3D" id="3.30.70.2120">
    <property type="match status" value="1"/>
</dbReference>
<dbReference type="Gene3D" id="1.20.1330.10">
    <property type="entry name" value="f41 fragment of flagellin, N-terminal domain"/>
    <property type="match status" value="2"/>
</dbReference>
<dbReference type="Gene3D" id="6.10.10.10">
    <property type="entry name" value="Flagellar export chaperone, C-terminal domain"/>
    <property type="match status" value="1"/>
</dbReference>
<dbReference type="InterPro" id="IPR001492">
    <property type="entry name" value="Flagellin"/>
</dbReference>
<dbReference type="InterPro" id="IPR046358">
    <property type="entry name" value="Flagellin_C"/>
</dbReference>
<dbReference type="InterPro" id="IPR042187">
    <property type="entry name" value="Flagellin_C_sub2"/>
</dbReference>
<dbReference type="InterPro" id="IPR010810">
    <property type="entry name" value="Flagellin_hook_IN_motif"/>
</dbReference>
<dbReference type="InterPro" id="IPR001029">
    <property type="entry name" value="Flagellin_N"/>
</dbReference>
<dbReference type="NCBIfam" id="NF009234">
    <property type="entry name" value="PRK12584.1"/>
    <property type="match status" value="1"/>
</dbReference>
<dbReference type="NCBIfam" id="NF010115">
    <property type="entry name" value="PRK13588.1"/>
    <property type="match status" value="1"/>
</dbReference>
<dbReference type="PANTHER" id="PTHR42792">
    <property type="entry name" value="FLAGELLIN"/>
    <property type="match status" value="1"/>
</dbReference>
<dbReference type="PANTHER" id="PTHR42792:SF2">
    <property type="entry name" value="FLAGELLIN"/>
    <property type="match status" value="1"/>
</dbReference>
<dbReference type="Pfam" id="PF00700">
    <property type="entry name" value="Flagellin_C"/>
    <property type="match status" value="1"/>
</dbReference>
<dbReference type="Pfam" id="PF07196">
    <property type="entry name" value="Flagellin_IN"/>
    <property type="match status" value="2"/>
</dbReference>
<dbReference type="Pfam" id="PF00669">
    <property type="entry name" value="Flagellin_N"/>
    <property type="match status" value="1"/>
</dbReference>
<dbReference type="PRINTS" id="PR00207">
    <property type="entry name" value="FLAGELLIN"/>
</dbReference>
<dbReference type="SUPFAM" id="SSF64518">
    <property type="entry name" value="Phase 1 flagellin"/>
    <property type="match status" value="1"/>
</dbReference>
<name>FLAA_HELMU</name>
<proteinExistence type="evidence at protein level"/>
<keyword id="KW-0975">Bacterial flagellum</keyword>
<keyword id="KW-0903">Direct protein sequencing</keyword>
<keyword id="KW-0964">Secreted</keyword>
<keyword id="KW-0843">Virulence</keyword>
<evidence type="ECO:0000305" key="1"/>
<sequence>AFQVNTNINALTTSAGATQLGLKNSLEKLSSGLRINKAADDASGMTISDSLRSQASALGQAISNANDGIGIIQVADKAMDEQLKILDTIKVKATQAAQDGQSLESRKAIQSDIIRLIQGLDNIGNTTSYNGQSLLSGQWTNKEFQIGTYSNQSIKVSVGSTTSDKIGQVRINTGAMITAASEATLTFKQINGGGTSPLEGVKISHSVGTGLGVLAEVINKNSDKTGIRAKASVETTSDKEIMSGNLKNLTINDVNIGNIVDIKKGDADGRLVQAINALTSSTGVEASTDSKGRLNLRSVDGRGIVLKADASEDNGDGKSAPMAIDAVNGGQSITDGEGAANYGRLSLVRLDARDIVLTSSDKPDENKFSAIGFGDNNVAMATVNLRDVLGKFDASVKSASGANYNAVIASGNSNLGAGVTTLVGAMLVMDIADSARKTLDKIRSDLGSVQGQMVSTVNNISVTQVNVKAAESRMREVDFAAESAEFNKYNILAQ</sequence>
<organism>
    <name type="scientific">Helicobacter mustelae</name>
    <dbReference type="NCBI Taxonomy" id="217"/>
    <lineage>
        <taxon>Bacteria</taxon>
        <taxon>Pseudomonadati</taxon>
        <taxon>Campylobacterota</taxon>
        <taxon>Epsilonproteobacteria</taxon>
        <taxon>Campylobacterales</taxon>
        <taxon>Helicobacteraceae</taxon>
        <taxon>Helicobacter</taxon>
    </lineage>
</organism>